<feature type="signal peptide" evidence="2">
    <location>
        <begin position="1" status="less than"/>
        <end position="25"/>
    </location>
</feature>
<feature type="chain" id="PRO_0000019372" description="Sodium/potassium/calcium exchanger 3">
    <location>
        <begin position="26"/>
        <end position="624"/>
    </location>
</feature>
<feature type="topological domain" description="Extracellular" evidence="2">
    <location>
        <begin position="26"/>
        <end position="88"/>
    </location>
</feature>
<feature type="transmembrane region" description="Helical" evidence="2">
    <location>
        <begin position="89"/>
        <end position="109"/>
    </location>
</feature>
<feature type="topological domain" description="Cytoplasmic" evidence="2">
    <location>
        <begin position="110"/>
        <end position="133"/>
    </location>
</feature>
<feature type="transmembrane region" description="Helical" evidence="2">
    <location>
        <begin position="134"/>
        <end position="154"/>
    </location>
</feature>
<feature type="topological domain" description="Extracellular" evidence="2">
    <location>
        <begin position="155"/>
        <end position="163"/>
    </location>
</feature>
<feature type="transmembrane region" description="Helical" evidence="2">
    <location>
        <begin position="164"/>
        <end position="184"/>
    </location>
</feature>
<feature type="topological domain" description="Cytoplasmic" evidence="2">
    <location>
        <begin position="185"/>
        <end position="191"/>
    </location>
</feature>
<feature type="transmembrane region" description="Helical" evidence="2">
    <location>
        <begin position="192"/>
        <end position="212"/>
    </location>
</feature>
<feature type="topological domain" description="Extracellular" evidence="2">
    <location>
        <begin position="213"/>
        <end position="215"/>
    </location>
</feature>
<feature type="transmembrane region" description="Helical" evidence="2">
    <location>
        <begin position="216"/>
        <end position="236"/>
    </location>
</feature>
<feature type="topological domain" description="Cytoplasmic" evidence="2">
    <location>
        <begin position="237"/>
        <end position="465"/>
    </location>
</feature>
<feature type="transmembrane region" description="Helical" evidence="2">
    <location>
        <begin position="466"/>
        <end position="486"/>
    </location>
</feature>
<feature type="topological domain" description="Extracellular" evidence="2">
    <location>
        <begin position="487"/>
        <end position="491"/>
    </location>
</feature>
<feature type="transmembrane region" description="Helical" evidence="2">
    <location>
        <begin position="492"/>
        <end position="512"/>
    </location>
</feature>
<feature type="topological domain" description="Cytoplasmic" evidence="2">
    <location>
        <begin position="513"/>
        <end position="530"/>
    </location>
</feature>
<feature type="transmembrane region" description="Helical" evidence="2">
    <location>
        <begin position="531"/>
        <end position="551"/>
    </location>
</feature>
<feature type="topological domain" description="Extracellular" evidence="2">
    <location>
        <begin position="552"/>
        <end position="561"/>
    </location>
</feature>
<feature type="transmembrane region" description="Helical" evidence="2">
    <location>
        <begin position="562"/>
        <end position="582"/>
    </location>
</feature>
<feature type="topological domain" description="Cytoplasmic" evidence="2">
    <location>
        <begin position="583"/>
        <end position="596"/>
    </location>
</feature>
<feature type="transmembrane region" description="Helical" evidence="2">
    <location>
        <begin position="597"/>
        <end position="617"/>
    </location>
</feature>
<feature type="topological domain" description="Extracellular" evidence="2">
    <location>
        <begin position="618"/>
        <end position="624"/>
    </location>
</feature>
<feature type="repeat" description="Alpha-1">
    <location>
        <begin position="130"/>
        <end position="170"/>
    </location>
</feature>
<feature type="repeat" description="Alpha-2">
    <location>
        <begin position="499"/>
        <end position="530"/>
    </location>
</feature>
<feature type="region of interest" description="Disordered" evidence="3">
    <location>
        <begin position="386"/>
        <end position="421"/>
    </location>
</feature>
<feature type="compositionally biased region" description="Acidic residues" evidence="3">
    <location>
        <begin position="386"/>
        <end position="414"/>
    </location>
</feature>
<feature type="modified residue" description="Phosphoserine" evidence="6">
    <location>
        <position position="289"/>
    </location>
</feature>
<feature type="glycosylation site" description="N-linked (GlcNAc...) asparagine" evidence="2">
    <location>
        <position position="52"/>
    </location>
</feature>
<feature type="glycosylation site" description="N-linked (GlcNAc...) asparagine" evidence="2">
    <location>
        <position position="67"/>
    </location>
</feature>
<feature type="non-terminal residue">
    <location>
        <position position="1"/>
    </location>
</feature>
<dbReference type="EMBL" id="AY009158">
    <property type="protein sequence ID" value="AAG32680.1"/>
    <property type="molecule type" value="mRNA"/>
</dbReference>
<dbReference type="RefSeq" id="NP_445957.2">
    <property type="nucleotide sequence ID" value="NM_053505.2"/>
</dbReference>
<dbReference type="SMR" id="Q9EPQ0"/>
<dbReference type="FunCoup" id="Q9EPQ0">
    <property type="interactions" value="1139"/>
</dbReference>
<dbReference type="STRING" id="10116.ENSRNOP00000071351"/>
<dbReference type="GlyCosmos" id="Q9EPQ0">
    <property type="glycosylation" value="2 sites, No reported glycans"/>
</dbReference>
<dbReference type="GlyGen" id="Q9EPQ0">
    <property type="glycosylation" value="2 sites"/>
</dbReference>
<dbReference type="iPTMnet" id="Q9EPQ0"/>
<dbReference type="PhosphoSitePlus" id="Q9EPQ0"/>
<dbReference type="PaxDb" id="10116-ENSRNOP00000012683"/>
<dbReference type="GeneID" id="85267"/>
<dbReference type="KEGG" id="rno:85267"/>
<dbReference type="UCSC" id="RGD:69256">
    <property type="organism name" value="rat"/>
</dbReference>
<dbReference type="AGR" id="RGD:69256"/>
<dbReference type="CTD" id="57419"/>
<dbReference type="RGD" id="69256">
    <property type="gene designation" value="Slc24a3"/>
</dbReference>
<dbReference type="eggNOG" id="KOG1307">
    <property type="taxonomic scope" value="Eukaryota"/>
</dbReference>
<dbReference type="InParanoid" id="Q9EPQ0"/>
<dbReference type="OrthoDB" id="30045at9989"/>
<dbReference type="PhylomeDB" id="Q9EPQ0"/>
<dbReference type="Reactome" id="R-RNO-425561">
    <property type="pathway name" value="Sodium/Calcium exchangers"/>
</dbReference>
<dbReference type="Proteomes" id="UP000002494">
    <property type="component" value="Unplaced"/>
</dbReference>
<dbReference type="GO" id="GO:0071944">
    <property type="term" value="C:cell periphery"/>
    <property type="evidence" value="ECO:0000314"/>
    <property type="project" value="ARUK-UCL"/>
</dbReference>
<dbReference type="GO" id="GO:0005886">
    <property type="term" value="C:plasma membrane"/>
    <property type="evidence" value="ECO:0000266"/>
    <property type="project" value="RGD"/>
</dbReference>
<dbReference type="GO" id="GO:0005262">
    <property type="term" value="F:calcium channel activity"/>
    <property type="evidence" value="ECO:0000318"/>
    <property type="project" value="GO_Central"/>
</dbReference>
<dbReference type="GO" id="GO:0008273">
    <property type="term" value="F:calcium, potassium:sodium antiporter activity"/>
    <property type="evidence" value="ECO:0000314"/>
    <property type="project" value="RGD"/>
</dbReference>
<dbReference type="GO" id="GO:0015293">
    <property type="term" value="F:symporter activity"/>
    <property type="evidence" value="ECO:0007669"/>
    <property type="project" value="UniProtKB-KW"/>
</dbReference>
<dbReference type="GO" id="GO:0030282">
    <property type="term" value="P:bone mineralization"/>
    <property type="evidence" value="ECO:0000266"/>
    <property type="project" value="RGD"/>
</dbReference>
<dbReference type="GO" id="GO:0070588">
    <property type="term" value="P:calcium ion transmembrane transport"/>
    <property type="evidence" value="ECO:0000266"/>
    <property type="project" value="RGD"/>
</dbReference>
<dbReference type="GO" id="GO:0006874">
    <property type="term" value="P:intracellular calcium ion homeostasis"/>
    <property type="evidence" value="ECO:0000266"/>
    <property type="project" value="RGD"/>
</dbReference>
<dbReference type="GO" id="GO:0006812">
    <property type="term" value="P:monoatomic cation transport"/>
    <property type="evidence" value="ECO:0000314"/>
    <property type="project" value="RGD"/>
</dbReference>
<dbReference type="GO" id="GO:0010629">
    <property type="term" value="P:negative regulation of gene expression"/>
    <property type="evidence" value="ECO:0000266"/>
    <property type="project" value="RGD"/>
</dbReference>
<dbReference type="GO" id="GO:0010628">
    <property type="term" value="P:positive regulation of gene expression"/>
    <property type="evidence" value="ECO:0000266"/>
    <property type="project" value="RGD"/>
</dbReference>
<dbReference type="GO" id="GO:0071805">
    <property type="term" value="P:potassium ion transmembrane transport"/>
    <property type="evidence" value="ECO:0000266"/>
    <property type="project" value="RGD"/>
</dbReference>
<dbReference type="GO" id="GO:0035725">
    <property type="term" value="P:sodium ion transmembrane transport"/>
    <property type="evidence" value="ECO:0000266"/>
    <property type="project" value="RGD"/>
</dbReference>
<dbReference type="FunFam" id="1.20.1420.30:FF:000005">
    <property type="entry name" value="sodium/potassium/calcium exchanger 3 isoform X1"/>
    <property type="match status" value="1"/>
</dbReference>
<dbReference type="FunFam" id="1.20.1420.30:FF:000006">
    <property type="entry name" value="sodium/potassium/calcium exchanger 4 isoform X1"/>
    <property type="match status" value="1"/>
</dbReference>
<dbReference type="Gene3D" id="1.20.1420.30">
    <property type="entry name" value="NCX, central ion-binding region"/>
    <property type="match status" value="2"/>
</dbReference>
<dbReference type="InterPro" id="IPR004481">
    <property type="entry name" value="K/Na/Ca-exchanger"/>
</dbReference>
<dbReference type="InterPro" id="IPR004837">
    <property type="entry name" value="NaCa_Exmemb"/>
</dbReference>
<dbReference type="InterPro" id="IPR044880">
    <property type="entry name" value="NCX_ion-bd_dom_sf"/>
</dbReference>
<dbReference type="NCBIfam" id="TIGR00367">
    <property type="entry name" value="calcium/sodium antiporter"/>
    <property type="match status" value="1"/>
</dbReference>
<dbReference type="PANTHER" id="PTHR10846">
    <property type="entry name" value="SODIUM/POTASSIUM/CALCIUM EXCHANGER"/>
    <property type="match status" value="1"/>
</dbReference>
<dbReference type="PANTHER" id="PTHR10846:SF42">
    <property type="entry name" value="SODIUM_POTASSIUM_CALCIUM EXCHANGER 3"/>
    <property type="match status" value="1"/>
</dbReference>
<dbReference type="Pfam" id="PF01699">
    <property type="entry name" value="Na_Ca_ex"/>
    <property type="match status" value="2"/>
</dbReference>
<comment type="function">
    <text evidence="4">Calcium, potassium:sodium antiporter that transports 1 Ca(2+) and 1 K(+) in exchange for 4 Na(+).</text>
</comment>
<comment type="catalytic activity">
    <reaction evidence="1">
        <text>Ca(2+)(out) + K(+)(out) + 4 Na(+)(in) = Ca(2+)(in) + K(+)(in) + 4 Na(+)(out)</text>
        <dbReference type="Rhea" id="RHEA:69967"/>
        <dbReference type="ChEBI" id="CHEBI:29101"/>
        <dbReference type="ChEBI" id="CHEBI:29103"/>
        <dbReference type="ChEBI" id="CHEBI:29108"/>
    </reaction>
</comment>
<comment type="subcellular location">
    <subcellularLocation>
        <location evidence="1">Cell membrane</location>
        <topology evidence="2">Multi-pass membrane protein</topology>
    </subcellularLocation>
</comment>
<comment type="tissue specificity">
    <text evidence="4">Abundant in the brain. Expressed at low levels in the aorta, uterus and intestine.</text>
</comment>
<comment type="similarity">
    <text evidence="5">Belongs to the Ca(2+):cation antiporter (CaCA) (TC 2.A.19) family. SLC24A subfamily.</text>
</comment>
<organism>
    <name type="scientific">Rattus norvegicus</name>
    <name type="common">Rat</name>
    <dbReference type="NCBI Taxonomy" id="10116"/>
    <lineage>
        <taxon>Eukaryota</taxon>
        <taxon>Metazoa</taxon>
        <taxon>Chordata</taxon>
        <taxon>Craniata</taxon>
        <taxon>Vertebrata</taxon>
        <taxon>Euteleostomi</taxon>
        <taxon>Mammalia</taxon>
        <taxon>Eutheria</taxon>
        <taxon>Euarchontoglires</taxon>
        <taxon>Glires</taxon>
        <taxon>Rodentia</taxon>
        <taxon>Myomorpha</taxon>
        <taxon>Muroidea</taxon>
        <taxon>Muridae</taxon>
        <taxon>Murinae</taxon>
        <taxon>Rattus</taxon>
    </lineage>
</organism>
<name>NCKX3_RAT</name>
<accession>Q9EPQ0</accession>
<gene>
    <name type="primary">Slc24a3</name>
    <name type="synonym">Nckx3</name>
</gene>
<keyword id="KW-0050">Antiport</keyword>
<keyword id="KW-0106">Calcium</keyword>
<keyword id="KW-0109">Calcium transport</keyword>
<keyword id="KW-1003">Cell membrane</keyword>
<keyword id="KW-0325">Glycoprotein</keyword>
<keyword id="KW-0406">Ion transport</keyword>
<keyword id="KW-0472">Membrane</keyword>
<keyword id="KW-0597">Phosphoprotein</keyword>
<keyword id="KW-0630">Potassium</keyword>
<keyword id="KW-0633">Potassium transport</keyword>
<keyword id="KW-1185">Reference proteome</keyword>
<keyword id="KW-0677">Repeat</keyword>
<keyword id="KW-0732">Signal</keyword>
<keyword id="KW-0915">Sodium</keyword>
<keyword id="KW-0739">Sodium transport</keyword>
<keyword id="KW-0769">Symport</keyword>
<keyword id="KW-0812">Transmembrane</keyword>
<keyword id="KW-1133">Transmembrane helix</keyword>
<keyword id="KW-0813">Transport</keyword>
<protein>
    <recommendedName>
        <fullName>Sodium/potassium/calcium exchanger 3</fullName>
    </recommendedName>
    <alternativeName>
        <fullName>Na(+)/K(+)/Ca(2+)-exchange protein 3</fullName>
    </alternativeName>
    <alternativeName>
        <fullName>Solute carrier family 24 member 3</fullName>
    </alternativeName>
</protein>
<evidence type="ECO:0000250" key="1">
    <source>
        <dbReference type="UniProtKB" id="Q9HC58"/>
    </source>
</evidence>
<evidence type="ECO:0000255" key="2"/>
<evidence type="ECO:0000256" key="3">
    <source>
        <dbReference type="SAM" id="MobiDB-lite"/>
    </source>
</evidence>
<evidence type="ECO:0000269" key="4">
    <source>
    </source>
</evidence>
<evidence type="ECO:0000305" key="5"/>
<evidence type="ECO:0007744" key="6">
    <source>
    </source>
</evidence>
<proteinExistence type="evidence at protein level"/>
<sequence length="624" mass="69389">RDLLLSQLCFLASVALLLWSLSSLREQKELDLMDLIGEDRKWMVGRKLMQVNDTLTSEDAGLRSSKNCTEPALHEFPRDIFSNEDRRQGAVVLHVLCAMYMFYALAIVCDDFFVPSLEKICERLHLSEDVAGATFMAAGSSAPELFTSVIGVFITKGDVGVGTIVGSAVFNILCIIGVCGLFAGQVVALSSWCLLRDSIYYTLSVVALIVFIYDEKVSWWESLVLVLMYLIYIIIMKYNACIHQCFERRTKGAGNMVNGLANNAEIDDSSNCDATVVLLKKANFHRKASVIMVDELLSAYPHQLSFSEAGLRIMITSHFPPKTRLSMASRMLINERQRLINSRAYTNGESEVAIKIPIKHTVENGTGPSSAPDRGVNGTRRDDIVAEADNETENENEDENNENDEEEDEDDDEGPYTPFDPPSGKLETVKWAFTWPLSFVLYFTVPNCNKPHWEKWFMVTFASSTLWIAAFSYMMVWMVTIIGYTLGIPDVIMGITFLAAGTSVPDCMASLIVARQGMGDMAVSNSIGSNVFDILIGLGLPWALQTLAVDYGSYIRLNSRGLIYSVGLLLASVFVTVFGVHLNKWQLDKKLGCGCLFLYGVFLCFSIMTEFNVFTFVNLPMCGD</sequence>
<reference key="1">
    <citation type="journal article" date="2001" name="J. Biol. Chem.">
        <title>Molecular cloning of a third member of the potassium-dependent sodium-calcium exchanger gene family, NCKX3.</title>
        <authorList>
            <person name="Kraev A."/>
            <person name="Quednau B.D."/>
            <person name="Leach S."/>
            <person name="Li X.-F."/>
            <person name="Dong H."/>
            <person name="Winkfein R."/>
            <person name="Perizzolo M."/>
            <person name="Cai X."/>
            <person name="Yang R."/>
            <person name="Philipson K.D."/>
            <person name="Lytton J."/>
        </authorList>
    </citation>
    <scope>NUCLEOTIDE SEQUENCE [MRNA]</scope>
    <scope>FUNCTION</scope>
    <scope>TISSUE SPECIFICITY</scope>
    <source>
        <strain>Sprague-Dawley</strain>
        <tissue>Brain</tissue>
    </source>
</reference>
<reference key="2">
    <citation type="journal article" date="2012" name="Nat. Commun.">
        <title>Quantitative maps of protein phosphorylation sites across 14 different rat organs and tissues.</title>
        <authorList>
            <person name="Lundby A."/>
            <person name="Secher A."/>
            <person name="Lage K."/>
            <person name="Nordsborg N.B."/>
            <person name="Dmytriyev A."/>
            <person name="Lundby C."/>
            <person name="Olsen J.V."/>
        </authorList>
    </citation>
    <scope>PHOSPHORYLATION [LARGE SCALE ANALYSIS] AT SER-289</scope>
    <scope>IDENTIFICATION BY MASS SPECTROMETRY [LARGE SCALE ANALYSIS]</scope>
</reference>